<feature type="chain" id="PRO_1000089997" description="Acetate kinase">
    <location>
        <begin position="1"/>
        <end position="396"/>
    </location>
</feature>
<feature type="active site" description="Proton donor/acceptor" evidence="1">
    <location>
        <position position="146"/>
    </location>
</feature>
<feature type="binding site" evidence="1">
    <location>
        <position position="8"/>
    </location>
    <ligand>
        <name>Mg(2+)</name>
        <dbReference type="ChEBI" id="CHEBI:18420"/>
    </ligand>
</feature>
<feature type="binding site" evidence="1">
    <location>
        <position position="15"/>
    </location>
    <ligand>
        <name>ATP</name>
        <dbReference type="ChEBI" id="CHEBI:30616"/>
    </ligand>
</feature>
<feature type="binding site" evidence="1">
    <location>
        <position position="89"/>
    </location>
    <ligand>
        <name>substrate</name>
    </ligand>
</feature>
<feature type="binding site" evidence="1">
    <location>
        <begin position="206"/>
        <end position="210"/>
    </location>
    <ligand>
        <name>ATP</name>
        <dbReference type="ChEBI" id="CHEBI:30616"/>
    </ligand>
</feature>
<feature type="binding site" evidence="1">
    <location>
        <begin position="283"/>
        <end position="285"/>
    </location>
    <ligand>
        <name>ATP</name>
        <dbReference type="ChEBI" id="CHEBI:30616"/>
    </ligand>
</feature>
<feature type="binding site" evidence="1">
    <location>
        <begin position="331"/>
        <end position="335"/>
    </location>
    <ligand>
        <name>ATP</name>
        <dbReference type="ChEBI" id="CHEBI:30616"/>
    </ligand>
</feature>
<feature type="binding site" evidence="1">
    <location>
        <position position="383"/>
    </location>
    <ligand>
        <name>Mg(2+)</name>
        <dbReference type="ChEBI" id="CHEBI:18420"/>
    </ligand>
</feature>
<feature type="site" description="Transition state stabilizer" evidence="1">
    <location>
        <position position="178"/>
    </location>
</feature>
<feature type="site" description="Transition state stabilizer" evidence="1">
    <location>
        <position position="239"/>
    </location>
</feature>
<organism>
    <name type="scientific">Streptococcus pneumoniae (strain Hungary19A-6)</name>
    <dbReference type="NCBI Taxonomy" id="487214"/>
    <lineage>
        <taxon>Bacteria</taxon>
        <taxon>Bacillati</taxon>
        <taxon>Bacillota</taxon>
        <taxon>Bacilli</taxon>
        <taxon>Lactobacillales</taxon>
        <taxon>Streptococcaceae</taxon>
        <taxon>Streptococcus</taxon>
    </lineage>
</organism>
<dbReference type="EC" id="2.7.2.1" evidence="1"/>
<dbReference type="EMBL" id="CP000936">
    <property type="protein sequence ID" value="ACA36993.1"/>
    <property type="molecule type" value="Genomic_DNA"/>
</dbReference>
<dbReference type="RefSeq" id="WP_000167753.1">
    <property type="nucleotide sequence ID" value="NC_010380.1"/>
</dbReference>
<dbReference type="SMR" id="B1I9A0"/>
<dbReference type="KEGG" id="spv:SPH_2197"/>
<dbReference type="HOGENOM" id="CLU_020352_0_1_9"/>
<dbReference type="UniPathway" id="UPA00340">
    <property type="reaction ID" value="UER00458"/>
</dbReference>
<dbReference type="Proteomes" id="UP000002163">
    <property type="component" value="Chromosome"/>
</dbReference>
<dbReference type="GO" id="GO:0005737">
    <property type="term" value="C:cytoplasm"/>
    <property type="evidence" value="ECO:0007669"/>
    <property type="project" value="UniProtKB-SubCell"/>
</dbReference>
<dbReference type="GO" id="GO:0008776">
    <property type="term" value="F:acetate kinase activity"/>
    <property type="evidence" value="ECO:0007669"/>
    <property type="project" value="UniProtKB-UniRule"/>
</dbReference>
<dbReference type="GO" id="GO:0005524">
    <property type="term" value="F:ATP binding"/>
    <property type="evidence" value="ECO:0007669"/>
    <property type="project" value="UniProtKB-KW"/>
</dbReference>
<dbReference type="GO" id="GO:0000287">
    <property type="term" value="F:magnesium ion binding"/>
    <property type="evidence" value="ECO:0007669"/>
    <property type="project" value="UniProtKB-UniRule"/>
</dbReference>
<dbReference type="GO" id="GO:0006083">
    <property type="term" value="P:acetate metabolic process"/>
    <property type="evidence" value="ECO:0007669"/>
    <property type="project" value="TreeGrafter"/>
</dbReference>
<dbReference type="GO" id="GO:0006085">
    <property type="term" value="P:acetyl-CoA biosynthetic process"/>
    <property type="evidence" value="ECO:0007669"/>
    <property type="project" value="UniProtKB-UniRule"/>
</dbReference>
<dbReference type="CDD" id="cd24010">
    <property type="entry name" value="ASKHA_NBD_AcK_PK"/>
    <property type="match status" value="1"/>
</dbReference>
<dbReference type="Gene3D" id="3.30.420.40">
    <property type="match status" value="2"/>
</dbReference>
<dbReference type="HAMAP" id="MF_00020">
    <property type="entry name" value="Acetate_kinase"/>
    <property type="match status" value="1"/>
</dbReference>
<dbReference type="InterPro" id="IPR004372">
    <property type="entry name" value="Ac/propionate_kinase"/>
</dbReference>
<dbReference type="InterPro" id="IPR000890">
    <property type="entry name" value="Aliphatic_acid_kin_short-chain"/>
</dbReference>
<dbReference type="InterPro" id="IPR023865">
    <property type="entry name" value="Aliphatic_acid_kinase_CS"/>
</dbReference>
<dbReference type="InterPro" id="IPR043129">
    <property type="entry name" value="ATPase_NBD"/>
</dbReference>
<dbReference type="NCBIfam" id="TIGR00016">
    <property type="entry name" value="ackA"/>
    <property type="match status" value="1"/>
</dbReference>
<dbReference type="PANTHER" id="PTHR21060">
    <property type="entry name" value="ACETATE KINASE"/>
    <property type="match status" value="1"/>
</dbReference>
<dbReference type="PANTHER" id="PTHR21060:SF15">
    <property type="entry name" value="ACETATE KINASE-RELATED"/>
    <property type="match status" value="1"/>
</dbReference>
<dbReference type="Pfam" id="PF00871">
    <property type="entry name" value="Acetate_kinase"/>
    <property type="match status" value="1"/>
</dbReference>
<dbReference type="PIRSF" id="PIRSF000722">
    <property type="entry name" value="Acetate_prop_kin"/>
    <property type="match status" value="1"/>
</dbReference>
<dbReference type="PRINTS" id="PR00471">
    <property type="entry name" value="ACETATEKNASE"/>
</dbReference>
<dbReference type="SUPFAM" id="SSF53067">
    <property type="entry name" value="Actin-like ATPase domain"/>
    <property type="match status" value="2"/>
</dbReference>
<dbReference type="PROSITE" id="PS01075">
    <property type="entry name" value="ACETATE_KINASE_1"/>
    <property type="match status" value="1"/>
</dbReference>
<dbReference type="PROSITE" id="PS01076">
    <property type="entry name" value="ACETATE_KINASE_2"/>
    <property type="match status" value="1"/>
</dbReference>
<evidence type="ECO:0000255" key="1">
    <source>
        <dbReference type="HAMAP-Rule" id="MF_00020"/>
    </source>
</evidence>
<proteinExistence type="inferred from homology"/>
<keyword id="KW-0067">ATP-binding</keyword>
<keyword id="KW-0963">Cytoplasm</keyword>
<keyword id="KW-0418">Kinase</keyword>
<keyword id="KW-0460">Magnesium</keyword>
<keyword id="KW-0479">Metal-binding</keyword>
<keyword id="KW-0547">Nucleotide-binding</keyword>
<keyword id="KW-0808">Transferase</keyword>
<sequence length="396" mass="43330">MTKTIAINAGSSSLKWQLYLMPEEKVLAKGLIERIGLKDSISTVKFDGCSEQQILDIENHTQAVKILLDDLIRFDIIKAYDEITGVGHRVVAGGEYFKESTVVEGDVLEKVEELSLLAPLHNPANAAGVRAFKELLPDITSVVVFDTSFHTSMPEKAYRYPLPTKYYTENKVRKYGAHGTSHQFVAGEAAKLLGRPLEDLKLITCHIGNGGSITAVKAGKSVDTSMGFTPLGGIMMGTRTGDIDPAIIPYLMQYTEDFNTPEDISRVLNRESGLLGVSANSSDMRDIEAAVAEGNHEASLAYEMYVDRIQKYIGQYLAVLNGADAIVFTAGVGENAENFRRDVISGISWFGCDVDDEKNVFGVTGDISTEAAKIRVLVIPTDEELVIARDVERLKK</sequence>
<gene>
    <name evidence="1" type="primary">ackA</name>
    <name type="ordered locus">SPH_2197</name>
</gene>
<accession>B1I9A0</accession>
<protein>
    <recommendedName>
        <fullName evidence="1">Acetate kinase</fullName>
        <ecNumber evidence="1">2.7.2.1</ecNumber>
    </recommendedName>
    <alternativeName>
        <fullName evidence="1">Acetokinase</fullName>
    </alternativeName>
</protein>
<name>ACKA_STRPI</name>
<reference key="1">
    <citation type="journal article" date="2010" name="Genome Biol.">
        <title>Structure and dynamics of the pan-genome of Streptococcus pneumoniae and closely related species.</title>
        <authorList>
            <person name="Donati C."/>
            <person name="Hiller N.L."/>
            <person name="Tettelin H."/>
            <person name="Muzzi A."/>
            <person name="Croucher N.J."/>
            <person name="Angiuoli S.V."/>
            <person name="Oggioni M."/>
            <person name="Dunning Hotopp J.C."/>
            <person name="Hu F.Z."/>
            <person name="Riley D.R."/>
            <person name="Covacci A."/>
            <person name="Mitchell T.J."/>
            <person name="Bentley S.D."/>
            <person name="Kilian M."/>
            <person name="Ehrlich G.D."/>
            <person name="Rappuoli R."/>
            <person name="Moxon E.R."/>
            <person name="Masignani V."/>
        </authorList>
    </citation>
    <scope>NUCLEOTIDE SEQUENCE [LARGE SCALE GENOMIC DNA]</scope>
    <source>
        <strain>Hungary19A-6</strain>
    </source>
</reference>
<comment type="function">
    <text evidence="1">Catalyzes the formation of acetyl phosphate from acetate and ATP. Can also catalyze the reverse reaction.</text>
</comment>
<comment type="catalytic activity">
    <reaction evidence="1">
        <text>acetate + ATP = acetyl phosphate + ADP</text>
        <dbReference type="Rhea" id="RHEA:11352"/>
        <dbReference type="ChEBI" id="CHEBI:22191"/>
        <dbReference type="ChEBI" id="CHEBI:30089"/>
        <dbReference type="ChEBI" id="CHEBI:30616"/>
        <dbReference type="ChEBI" id="CHEBI:456216"/>
        <dbReference type="EC" id="2.7.2.1"/>
    </reaction>
</comment>
<comment type="cofactor">
    <cofactor evidence="1">
        <name>Mg(2+)</name>
        <dbReference type="ChEBI" id="CHEBI:18420"/>
    </cofactor>
    <cofactor evidence="1">
        <name>Mn(2+)</name>
        <dbReference type="ChEBI" id="CHEBI:29035"/>
    </cofactor>
    <text evidence="1">Mg(2+). Can also accept Mn(2+).</text>
</comment>
<comment type="pathway">
    <text evidence="1">Metabolic intermediate biosynthesis; acetyl-CoA biosynthesis; acetyl-CoA from acetate: step 1/2.</text>
</comment>
<comment type="subunit">
    <text evidence="1">Homodimer.</text>
</comment>
<comment type="subcellular location">
    <subcellularLocation>
        <location evidence="1">Cytoplasm</location>
    </subcellularLocation>
</comment>
<comment type="similarity">
    <text evidence="1">Belongs to the acetokinase family.</text>
</comment>